<keyword id="KW-0012">Acyltransferase</keyword>
<keyword id="KW-0998">Cell outer membrane</keyword>
<keyword id="KW-0472">Membrane</keyword>
<keyword id="KW-1185">Reference proteome</keyword>
<keyword id="KW-0732">Signal</keyword>
<keyword id="KW-0808">Transferase</keyword>
<protein>
    <recommendedName>
        <fullName evidence="1">Lipid A acyltransferase PagP</fullName>
        <ecNumber evidence="1">2.3.1.251</ecNumber>
    </recommendedName>
    <alternativeName>
        <fullName evidence="1">Lipid A acylation protein</fullName>
    </alternativeName>
</protein>
<dbReference type="EC" id="2.3.1.251" evidence="1"/>
<dbReference type="EMBL" id="CP000284">
    <property type="protein sequence ID" value="ABE49133.1"/>
    <property type="molecule type" value="Genomic_DNA"/>
</dbReference>
<dbReference type="EMBL" id="CP000284">
    <property type="protein sequence ID" value="ABE49277.1"/>
    <property type="molecule type" value="Genomic_DNA"/>
</dbReference>
<dbReference type="RefSeq" id="WP_011479230.1">
    <property type="nucleotide sequence ID" value="NC_007947.1"/>
</dbReference>
<dbReference type="SMR" id="Q1H2L0"/>
<dbReference type="STRING" id="265072.Mfla_0865"/>
<dbReference type="KEGG" id="mfa:Mfla_0865"/>
<dbReference type="KEGG" id="mfa:Mfla_1009"/>
<dbReference type="eggNOG" id="ENOG502Z7SY">
    <property type="taxonomic scope" value="Bacteria"/>
</dbReference>
<dbReference type="HOGENOM" id="CLU_104099_0_0_4"/>
<dbReference type="OrthoDB" id="9156803at2"/>
<dbReference type="Proteomes" id="UP000002440">
    <property type="component" value="Chromosome"/>
</dbReference>
<dbReference type="GO" id="GO:0009279">
    <property type="term" value="C:cell outer membrane"/>
    <property type="evidence" value="ECO:0007669"/>
    <property type="project" value="UniProtKB-SubCell"/>
</dbReference>
<dbReference type="GO" id="GO:0016746">
    <property type="term" value="F:acyltransferase activity"/>
    <property type="evidence" value="ECO:0007669"/>
    <property type="project" value="UniProtKB-UniRule"/>
</dbReference>
<dbReference type="GO" id="GO:0009245">
    <property type="term" value="P:lipid A biosynthetic process"/>
    <property type="evidence" value="ECO:0007669"/>
    <property type="project" value="UniProtKB-UniRule"/>
</dbReference>
<dbReference type="Gene3D" id="2.40.160.20">
    <property type="match status" value="1"/>
</dbReference>
<dbReference type="HAMAP" id="MF_00837">
    <property type="entry name" value="PagP_transferase"/>
    <property type="match status" value="1"/>
</dbReference>
<dbReference type="InterPro" id="IPR009746">
    <property type="entry name" value="LipidA_acyl_PagP"/>
</dbReference>
<dbReference type="InterPro" id="IPR011250">
    <property type="entry name" value="OMP/PagP_b-brl"/>
</dbReference>
<dbReference type="NCBIfam" id="NF008271">
    <property type="entry name" value="PRK11045.1"/>
    <property type="match status" value="1"/>
</dbReference>
<dbReference type="Pfam" id="PF07017">
    <property type="entry name" value="PagP"/>
    <property type="match status" value="1"/>
</dbReference>
<dbReference type="SUPFAM" id="SSF56925">
    <property type="entry name" value="OMPA-like"/>
    <property type="match status" value="1"/>
</dbReference>
<sequence>MNIRHGIIAMSSTMLVPLAAEAACNTDYSWIDKSCERISDTWKNGDHDLYIPLWTHHLRFAYDNDKIDSFREFTWGLGYGRSRYNAAGNWEGVYLMAFSDSHSNVQPMLGYGHQWMMGPRSGLHAGVGYTAFLTSRADIYKNIPIPGVLPIASLNYRQYSVNTSYVPGGRGNGNILFFWSRVGF</sequence>
<feature type="signal peptide" evidence="1">
    <location>
        <begin position="1"/>
        <end position="22"/>
    </location>
</feature>
<feature type="chain" id="PRO_0000414464" description="Lipid A acyltransferase PagP">
    <location>
        <begin position="23"/>
        <end position="184"/>
    </location>
</feature>
<feature type="active site" evidence="1">
    <location>
        <position position="57"/>
    </location>
</feature>
<feature type="active site" evidence="1">
    <location>
        <position position="100"/>
    </location>
</feature>
<feature type="active site" evidence="1">
    <location>
        <position position="101"/>
    </location>
</feature>
<feature type="site" description="Role in lipopolysaccharide recognition" evidence="1">
    <location>
        <position position="66"/>
    </location>
</feature>
<accession>Q1H2L0</accession>
<name>PAGP_METFK</name>
<organism>
    <name type="scientific">Methylobacillus flagellatus (strain ATCC 51484 / DSM 6875 / VKM B-1610 / KT)</name>
    <dbReference type="NCBI Taxonomy" id="265072"/>
    <lineage>
        <taxon>Bacteria</taxon>
        <taxon>Pseudomonadati</taxon>
        <taxon>Pseudomonadota</taxon>
        <taxon>Betaproteobacteria</taxon>
        <taxon>Nitrosomonadales</taxon>
        <taxon>Methylophilaceae</taxon>
        <taxon>Methylobacillus</taxon>
    </lineage>
</organism>
<comment type="function">
    <text evidence="1">Transfers a fatty acid residue from the sn-1 position of a phospholipid to the N-linked hydroxyfatty acid chain on the proximal unit of lipid A or its precursors.</text>
</comment>
<comment type="catalytic activity">
    <reaction evidence="1">
        <text>a lipid A + a 1,2-diacyl-sn-glycero-3-phosphocholine = a hepta-acyl lipid A + a 2-acyl-sn-glycero-3-phosphocholine</text>
        <dbReference type="Rhea" id="RHEA:74275"/>
        <dbReference type="ChEBI" id="CHEBI:57643"/>
        <dbReference type="ChEBI" id="CHEBI:57875"/>
        <dbReference type="ChEBI" id="CHEBI:193141"/>
        <dbReference type="ChEBI" id="CHEBI:193142"/>
        <dbReference type="EC" id="2.3.1.251"/>
    </reaction>
</comment>
<comment type="catalytic activity">
    <reaction evidence="1">
        <text>a lipid IVA + a 1,2-diacyl-sn-glycero-3-phosphocholine = a lipid IVB + a 2-acyl-sn-glycero-3-phosphocholine</text>
        <dbReference type="Rhea" id="RHEA:74279"/>
        <dbReference type="ChEBI" id="CHEBI:57643"/>
        <dbReference type="ChEBI" id="CHEBI:57875"/>
        <dbReference type="ChEBI" id="CHEBI:176425"/>
        <dbReference type="ChEBI" id="CHEBI:193143"/>
        <dbReference type="EC" id="2.3.1.251"/>
    </reaction>
</comment>
<comment type="catalytic activity">
    <reaction evidence="1">
        <text>a lipid IIA + a 1,2-diacyl-sn-glycero-3-phosphocholine = a lipid IIB + a 2-acyl-sn-glycero-3-phosphocholine</text>
        <dbReference type="Rhea" id="RHEA:74283"/>
        <dbReference type="ChEBI" id="CHEBI:57643"/>
        <dbReference type="ChEBI" id="CHEBI:57875"/>
        <dbReference type="ChEBI" id="CHEBI:193144"/>
        <dbReference type="ChEBI" id="CHEBI:193145"/>
        <dbReference type="EC" id="2.3.1.251"/>
    </reaction>
</comment>
<comment type="subunit">
    <text evidence="1">Homodimer.</text>
</comment>
<comment type="subcellular location">
    <subcellularLocation>
        <location evidence="1">Cell outer membrane</location>
    </subcellularLocation>
</comment>
<comment type="similarity">
    <text evidence="1">Belongs to the lipid A palmitoyltransferase family.</text>
</comment>
<evidence type="ECO:0000255" key="1">
    <source>
        <dbReference type="HAMAP-Rule" id="MF_00837"/>
    </source>
</evidence>
<gene>
    <name evidence="1" type="primary">pagP1</name>
    <name type="ordered locus">Mfla_0865</name>
</gene>
<gene>
    <name evidence="1" type="primary">pagP2</name>
    <name type="ordered locus">Mfla_1009</name>
</gene>
<reference key="1">
    <citation type="submission" date="2006-03" db="EMBL/GenBank/DDBJ databases">
        <title>Complete sequence of Methylobacillus flagellatus KT.</title>
        <authorList>
            <consortium name="US DOE Joint Genome Institute"/>
            <person name="Copeland A."/>
            <person name="Lucas S."/>
            <person name="Lapidus A."/>
            <person name="Barry K."/>
            <person name="Detter J.C."/>
            <person name="Glavina del Rio T."/>
            <person name="Hammon N."/>
            <person name="Israni S."/>
            <person name="Dalin E."/>
            <person name="Tice H."/>
            <person name="Pitluck S."/>
            <person name="Brettin T."/>
            <person name="Bruce D."/>
            <person name="Han C."/>
            <person name="Tapia R."/>
            <person name="Saunders E."/>
            <person name="Gilna P."/>
            <person name="Schmutz J."/>
            <person name="Larimer F."/>
            <person name="Land M."/>
            <person name="Kyrpides N."/>
            <person name="Anderson I."/>
            <person name="Richardson P."/>
        </authorList>
    </citation>
    <scope>NUCLEOTIDE SEQUENCE [LARGE SCALE GENOMIC DNA]</scope>
    <source>
        <strain>ATCC 51484 / DSM 6875 / VKM B-1610 / KT</strain>
    </source>
</reference>
<proteinExistence type="inferred from homology"/>